<name>NHAA_PHOLL</name>
<accession>Q7N8X6</accession>
<gene>
    <name evidence="1" type="primary">nhaA</name>
    <name type="ordered locus">plu0587</name>
</gene>
<sequence>MTAIIRQFLKLEAAGGLLLIITAIIALIMANSPLQGIYQQFLNISVAVQFAALEINKPLLLWINDGLMAVFFLIVGLEVKRELLEGSLAGRDKALFPVIAAIGGMVAPALIYLLFNGNDEFTRQGWAIPAATDIAFALGVMALLSKRVPTELKVFLLALAIIDDLGVIVIIALFYTKTVSLVALGLSAAMIALLVWMNWRGVEKTSAYLAVGAILWVCILKSGVHATLAGVIVGFLIPLRGQNGHSPSELLEHGLHPWVAYLILPLFAFANAGVALNGVTLNGLTDILPLGIAVALFLGKPLGIFLFSYISIQIGFAKLPQQINLKQIFAVSVLCGIGFTMSIFISGLAFEGVDESFSVYSRLGILMGSTIAAFMGYGLLRMVLPKKK</sequence>
<comment type="function">
    <text evidence="1">Na(+)/H(+) antiporter that extrudes sodium in exchange for external protons.</text>
</comment>
<comment type="catalytic activity">
    <reaction evidence="1">
        <text>Na(+)(in) + 2 H(+)(out) = Na(+)(out) + 2 H(+)(in)</text>
        <dbReference type="Rhea" id="RHEA:29251"/>
        <dbReference type="ChEBI" id="CHEBI:15378"/>
        <dbReference type="ChEBI" id="CHEBI:29101"/>
    </reaction>
    <physiologicalReaction direction="left-to-right" evidence="1">
        <dbReference type="Rhea" id="RHEA:29252"/>
    </physiologicalReaction>
</comment>
<comment type="subcellular location">
    <subcellularLocation>
        <location evidence="1">Cell inner membrane</location>
        <topology evidence="1">Multi-pass membrane protein</topology>
    </subcellularLocation>
</comment>
<comment type="similarity">
    <text evidence="1">Belongs to the NhaA Na(+)/H(+) (TC 2.A.33) antiporter family.</text>
</comment>
<reference key="1">
    <citation type="journal article" date="2003" name="Nat. Biotechnol.">
        <title>The genome sequence of the entomopathogenic bacterium Photorhabdus luminescens.</title>
        <authorList>
            <person name="Duchaud E."/>
            <person name="Rusniok C."/>
            <person name="Frangeul L."/>
            <person name="Buchrieser C."/>
            <person name="Givaudan A."/>
            <person name="Taourit S."/>
            <person name="Bocs S."/>
            <person name="Boursaux-Eude C."/>
            <person name="Chandler M."/>
            <person name="Charles J.-F."/>
            <person name="Dassa E."/>
            <person name="Derose R."/>
            <person name="Derzelle S."/>
            <person name="Freyssinet G."/>
            <person name="Gaudriault S."/>
            <person name="Medigue C."/>
            <person name="Lanois A."/>
            <person name="Powell K."/>
            <person name="Siguier P."/>
            <person name="Vincent R."/>
            <person name="Wingate V."/>
            <person name="Zouine M."/>
            <person name="Glaser P."/>
            <person name="Boemare N."/>
            <person name="Danchin A."/>
            <person name="Kunst F."/>
        </authorList>
    </citation>
    <scope>NUCLEOTIDE SEQUENCE [LARGE SCALE GENOMIC DNA]</scope>
    <source>
        <strain>DSM 15139 / CIP 105565 / TT01</strain>
    </source>
</reference>
<proteinExistence type="inferred from homology"/>
<keyword id="KW-0050">Antiport</keyword>
<keyword id="KW-0997">Cell inner membrane</keyword>
<keyword id="KW-1003">Cell membrane</keyword>
<keyword id="KW-0406">Ion transport</keyword>
<keyword id="KW-0472">Membrane</keyword>
<keyword id="KW-1185">Reference proteome</keyword>
<keyword id="KW-0915">Sodium</keyword>
<keyword id="KW-0739">Sodium transport</keyword>
<keyword id="KW-0812">Transmembrane</keyword>
<keyword id="KW-1133">Transmembrane helix</keyword>
<keyword id="KW-0813">Transport</keyword>
<dbReference type="EMBL" id="BX571860">
    <property type="protein sequence ID" value="CAE12882.1"/>
    <property type="molecule type" value="Genomic_DNA"/>
</dbReference>
<dbReference type="RefSeq" id="WP_011144966.1">
    <property type="nucleotide sequence ID" value="NC_005126.1"/>
</dbReference>
<dbReference type="SMR" id="Q7N8X6"/>
<dbReference type="STRING" id="243265.plu0587"/>
<dbReference type="GeneID" id="48846874"/>
<dbReference type="KEGG" id="plu:plu0587"/>
<dbReference type="eggNOG" id="COG3004">
    <property type="taxonomic scope" value="Bacteria"/>
</dbReference>
<dbReference type="HOGENOM" id="CLU_015803_1_0_6"/>
<dbReference type="OrthoDB" id="9808135at2"/>
<dbReference type="Proteomes" id="UP000002514">
    <property type="component" value="Chromosome"/>
</dbReference>
<dbReference type="GO" id="GO:0005886">
    <property type="term" value="C:plasma membrane"/>
    <property type="evidence" value="ECO:0007669"/>
    <property type="project" value="UniProtKB-SubCell"/>
</dbReference>
<dbReference type="GO" id="GO:0015385">
    <property type="term" value="F:sodium:proton antiporter activity"/>
    <property type="evidence" value="ECO:0007669"/>
    <property type="project" value="TreeGrafter"/>
</dbReference>
<dbReference type="GO" id="GO:0006885">
    <property type="term" value="P:regulation of pH"/>
    <property type="evidence" value="ECO:0007669"/>
    <property type="project" value="InterPro"/>
</dbReference>
<dbReference type="Gene3D" id="1.20.1530.10">
    <property type="entry name" value="Na+/H+ antiporter like domain"/>
    <property type="match status" value="1"/>
</dbReference>
<dbReference type="HAMAP" id="MF_01844">
    <property type="entry name" value="NhaA"/>
    <property type="match status" value="1"/>
</dbReference>
<dbReference type="InterPro" id="IPR023171">
    <property type="entry name" value="Na/H_antiporter_dom_sf"/>
</dbReference>
<dbReference type="InterPro" id="IPR004670">
    <property type="entry name" value="NhaA"/>
</dbReference>
<dbReference type="NCBIfam" id="TIGR00773">
    <property type="entry name" value="NhaA"/>
    <property type="match status" value="1"/>
</dbReference>
<dbReference type="NCBIfam" id="NF007111">
    <property type="entry name" value="PRK09560.1"/>
    <property type="match status" value="1"/>
</dbReference>
<dbReference type="NCBIfam" id="NF007112">
    <property type="entry name" value="PRK09561.1"/>
    <property type="match status" value="1"/>
</dbReference>
<dbReference type="PANTHER" id="PTHR30341:SF0">
    <property type="entry name" value="NA(+)_H(+) ANTIPORTER NHAA"/>
    <property type="match status" value="1"/>
</dbReference>
<dbReference type="PANTHER" id="PTHR30341">
    <property type="entry name" value="SODIUM ION/PROTON ANTIPORTER NHAA-RELATED"/>
    <property type="match status" value="1"/>
</dbReference>
<dbReference type="Pfam" id="PF06965">
    <property type="entry name" value="Na_H_antiport_1"/>
    <property type="match status" value="1"/>
</dbReference>
<feature type="chain" id="PRO_0000334362" description="Na(+)/H(+) antiporter NhaA">
    <location>
        <begin position="1"/>
        <end position="388"/>
    </location>
</feature>
<feature type="transmembrane region" description="Helical" evidence="1">
    <location>
        <begin position="8"/>
        <end position="28"/>
    </location>
</feature>
<feature type="transmembrane region" description="Helical" evidence="1">
    <location>
        <begin position="33"/>
        <end position="53"/>
    </location>
</feature>
<feature type="transmembrane region" description="Helical" evidence="1">
    <location>
        <begin position="59"/>
        <end position="79"/>
    </location>
</feature>
<feature type="transmembrane region" description="Helical" evidence="1">
    <location>
        <begin position="95"/>
        <end position="115"/>
    </location>
</feature>
<feature type="transmembrane region" description="Helical" evidence="1">
    <location>
        <begin position="125"/>
        <end position="145"/>
    </location>
</feature>
<feature type="transmembrane region" description="Helical" evidence="1">
    <location>
        <begin position="154"/>
        <end position="174"/>
    </location>
</feature>
<feature type="transmembrane region" description="Helical" evidence="1">
    <location>
        <begin position="179"/>
        <end position="199"/>
    </location>
</feature>
<feature type="transmembrane region" description="Helical" evidence="1">
    <location>
        <begin position="217"/>
        <end position="237"/>
    </location>
</feature>
<feature type="transmembrane region" description="Helical" evidence="1">
    <location>
        <begin position="259"/>
        <end position="279"/>
    </location>
</feature>
<feature type="transmembrane region" description="Helical" evidence="1">
    <location>
        <begin position="287"/>
        <end position="307"/>
    </location>
</feature>
<feature type="transmembrane region" description="Helical" evidence="1">
    <location>
        <begin position="328"/>
        <end position="348"/>
    </location>
</feature>
<feature type="transmembrane region" description="Helical" evidence="1">
    <location>
        <begin position="363"/>
        <end position="383"/>
    </location>
</feature>
<evidence type="ECO:0000255" key="1">
    <source>
        <dbReference type="HAMAP-Rule" id="MF_01844"/>
    </source>
</evidence>
<organism>
    <name type="scientific">Photorhabdus laumondii subsp. laumondii (strain DSM 15139 / CIP 105565 / TT01)</name>
    <name type="common">Photorhabdus luminescens subsp. laumondii</name>
    <dbReference type="NCBI Taxonomy" id="243265"/>
    <lineage>
        <taxon>Bacteria</taxon>
        <taxon>Pseudomonadati</taxon>
        <taxon>Pseudomonadota</taxon>
        <taxon>Gammaproteobacteria</taxon>
        <taxon>Enterobacterales</taxon>
        <taxon>Morganellaceae</taxon>
        <taxon>Photorhabdus</taxon>
    </lineage>
</organism>
<protein>
    <recommendedName>
        <fullName evidence="1">Na(+)/H(+) antiporter NhaA</fullName>
    </recommendedName>
    <alternativeName>
        <fullName evidence="1">Sodium/proton antiporter NhaA</fullName>
    </alternativeName>
</protein>